<proteinExistence type="inferred from homology"/>
<evidence type="ECO:0000250" key="1"/>
<evidence type="ECO:0000269" key="2">
    <source>
    </source>
</evidence>
<evidence type="ECO:0000305" key="3"/>
<organism>
    <name type="scientific">Schizosaccharomyces pombe (strain 972 / ATCC 24843)</name>
    <name type="common">Fission yeast</name>
    <dbReference type="NCBI Taxonomy" id="284812"/>
    <lineage>
        <taxon>Eukaryota</taxon>
        <taxon>Fungi</taxon>
        <taxon>Dikarya</taxon>
        <taxon>Ascomycota</taxon>
        <taxon>Taphrinomycotina</taxon>
        <taxon>Schizosaccharomycetes</taxon>
        <taxon>Schizosaccharomycetales</taxon>
        <taxon>Schizosaccharomycetaceae</taxon>
        <taxon>Schizosaccharomyces</taxon>
    </lineage>
</organism>
<feature type="chain" id="PRO_0000315626" description="C-1-tetrahydrofolate synthase, cytoplasmic">
    <location>
        <begin position="1"/>
        <end position="937"/>
    </location>
</feature>
<feature type="region of interest" description="Methylenetetrahydrofolate dehydrogenase and cyclohydrolase">
    <location>
        <begin position="1"/>
        <end position="309"/>
    </location>
</feature>
<feature type="region of interest" description="Formyltetrahydrofolate synthetase">
    <location>
        <begin position="310"/>
        <end position="937"/>
    </location>
</feature>
<feature type="binding site" evidence="1">
    <location>
        <begin position="50"/>
        <end position="54"/>
    </location>
    <ligand>
        <name>substrate</name>
    </ligand>
</feature>
<feature type="binding site" evidence="1">
    <location>
        <begin position="97"/>
        <end position="99"/>
    </location>
    <ligand>
        <name>substrate</name>
    </ligand>
</feature>
<feature type="binding site" evidence="1">
    <location>
        <begin position="168"/>
        <end position="170"/>
    </location>
    <ligand>
        <name>NADP(+)</name>
        <dbReference type="ChEBI" id="CHEBI:58349"/>
    </ligand>
</feature>
<feature type="binding site" evidence="1">
    <location>
        <position position="193"/>
    </location>
    <ligand>
        <name>NADP(+)</name>
        <dbReference type="ChEBI" id="CHEBI:58349"/>
    </ligand>
</feature>
<feature type="binding site" evidence="1">
    <location>
        <begin position="268"/>
        <end position="272"/>
    </location>
    <ligand>
        <name>substrate</name>
    </ligand>
</feature>
<feature type="binding site" evidence="1">
    <location>
        <begin position="374"/>
        <end position="381"/>
    </location>
    <ligand>
        <name>ATP</name>
        <dbReference type="ChEBI" id="CHEBI:30616"/>
    </ligand>
</feature>
<accession>Q8WZJ7</accession>
<gene>
    <name type="ORF">SPBC839.16</name>
</gene>
<reference key="1">
    <citation type="journal article" date="2002" name="Nature">
        <title>The genome sequence of Schizosaccharomyces pombe.</title>
        <authorList>
            <person name="Wood V."/>
            <person name="Gwilliam R."/>
            <person name="Rajandream M.A."/>
            <person name="Lyne M.H."/>
            <person name="Lyne R."/>
            <person name="Stewart A."/>
            <person name="Sgouros J.G."/>
            <person name="Peat N."/>
            <person name="Hayles J."/>
            <person name="Baker S.G."/>
            <person name="Basham D."/>
            <person name="Bowman S."/>
            <person name="Brooks K."/>
            <person name="Brown D."/>
            <person name="Brown S."/>
            <person name="Chillingworth T."/>
            <person name="Churcher C.M."/>
            <person name="Collins M."/>
            <person name="Connor R."/>
            <person name="Cronin A."/>
            <person name="Davis P."/>
            <person name="Feltwell T."/>
            <person name="Fraser A."/>
            <person name="Gentles S."/>
            <person name="Goble A."/>
            <person name="Hamlin N."/>
            <person name="Harris D.E."/>
            <person name="Hidalgo J."/>
            <person name="Hodgson G."/>
            <person name="Holroyd S."/>
            <person name="Hornsby T."/>
            <person name="Howarth S."/>
            <person name="Huckle E.J."/>
            <person name="Hunt S."/>
            <person name="Jagels K."/>
            <person name="James K.D."/>
            <person name="Jones L."/>
            <person name="Jones M."/>
            <person name="Leather S."/>
            <person name="McDonald S."/>
            <person name="McLean J."/>
            <person name="Mooney P."/>
            <person name="Moule S."/>
            <person name="Mungall K.L."/>
            <person name="Murphy L.D."/>
            <person name="Niblett D."/>
            <person name="Odell C."/>
            <person name="Oliver K."/>
            <person name="O'Neil S."/>
            <person name="Pearson D."/>
            <person name="Quail M.A."/>
            <person name="Rabbinowitsch E."/>
            <person name="Rutherford K.M."/>
            <person name="Rutter S."/>
            <person name="Saunders D."/>
            <person name="Seeger K."/>
            <person name="Sharp S."/>
            <person name="Skelton J."/>
            <person name="Simmonds M.N."/>
            <person name="Squares R."/>
            <person name="Squares S."/>
            <person name="Stevens K."/>
            <person name="Taylor K."/>
            <person name="Taylor R.G."/>
            <person name="Tivey A."/>
            <person name="Walsh S.V."/>
            <person name="Warren T."/>
            <person name="Whitehead S."/>
            <person name="Woodward J.R."/>
            <person name="Volckaert G."/>
            <person name="Aert R."/>
            <person name="Robben J."/>
            <person name="Grymonprez B."/>
            <person name="Weltjens I."/>
            <person name="Vanstreels E."/>
            <person name="Rieger M."/>
            <person name="Schaefer M."/>
            <person name="Mueller-Auer S."/>
            <person name="Gabel C."/>
            <person name="Fuchs M."/>
            <person name="Duesterhoeft A."/>
            <person name="Fritzc C."/>
            <person name="Holzer E."/>
            <person name="Moestl D."/>
            <person name="Hilbert H."/>
            <person name="Borzym K."/>
            <person name="Langer I."/>
            <person name="Beck A."/>
            <person name="Lehrach H."/>
            <person name="Reinhardt R."/>
            <person name="Pohl T.M."/>
            <person name="Eger P."/>
            <person name="Zimmermann W."/>
            <person name="Wedler H."/>
            <person name="Wambutt R."/>
            <person name="Purnelle B."/>
            <person name="Goffeau A."/>
            <person name="Cadieu E."/>
            <person name="Dreano S."/>
            <person name="Gloux S."/>
            <person name="Lelaure V."/>
            <person name="Mottier S."/>
            <person name="Galibert F."/>
            <person name="Aves S.J."/>
            <person name="Xiang Z."/>
            <person name="Hunt C."/>
            <person name="Moore K."/>
            <person name="Hurst S.M."/>
            <person name="Lucas M."/>
            <person name="Rochet M."/>
            <person name="Gaillardin C."/>
            <person name="Tallada V.A."/>
            <person name="Garzon A."/>
            <person name="Thode G."/>
            <person name="Daga R.R."/>
            <person name="Cruzado L."/>
            <person name="Jimenez J."/>
            <person name="Sanchez M."/>
            <person name="del Rey F."/>
            <person name="Benito J."/>
            <person name="Dominguez A."/>
            <person name="Revuelta J.L."/>
            <person name="Moreno S."/>
            <person name="Armstrong J."/>
            <person name="Forsburg S.L."/>
            <person name="Cerutti L."/>
            <person name="Lowe T."/>
            <person name="McCombie W.R."/>
            <person name="Paulsen I."/>
            <person name="Potashkin J."/>
            <person name="Shpakovski G.V."/>
            <person name="Ussery D."/>
            <person name="Barrell B.G."/>
            <person name="Nurse P."/>
        </authorList>
    </citation>
    <scope>NUCLEOTIDE SEQUENCE [LARGE SCALE GENOMIC DNA]</scope>
    <source>
        <strain>972 / ATCC 24843</strain>
    </source>
</reference>
<reference key="2">
    <citation type="journal article" date="2006" name="Nat. Biotechnol.">
        <title>ORFeome cloning and global analysis of protein localization in the fission yeast Schizosaccharomyces pombe.</title>
        <authorList>
            <person name="Matsuyama A."/>
            <person name="Arai R."/>
            <person name="Yashiroda Y."/>
            <person name="Shirai A."/>
            <person name="Kamata A."/>
            <person name="Sekido S."/>
            <person name="Kobayashi Y."/>
            <person name="Hashimoto A."/>
            <person name="Hamamoto M."/>
            <person name="Hiraoka Y."/>
            <person name="Horinouchi S."/>
            <person name="Yoshida M."/>
        </authorList>
    </citation>
    <scope>SUBCELLULAR LOCATION [LARGE SCALE ANALYSIS]</scope>
</reference>
<sequence length="937" mass="101203">MALLLEGTSLARKVREELREQISSIKSVDPYFNVSLKIIQVGGREDSNVYVRMKTRAANEAGISCEHVNFPEDITEYDLLLAIKGFNEDPTVHGIIVQLPLPAHINEQIITEAVAPEKDVDGFCETNLGKLTKREGQPLFTACTPKGIMCILKHYGINVQGKHAVVIGRSNIVGRPMSILLEKANATVTLCHSKTESIADIVRTADIVVAAIGIPHFVKADWLKKGVVAIDVGINSIPDATKKSGYRLTGDIDFENAKEVASAITPVPGSVGPMTVAMLLQNVVESAVRFRKMSRKRKPTLLPLKLQTPVPSDIEIARSQTPKNIGDLASEIGIAKSELEFYGSHKAKVNLEILQRLAHRRDGHYVVVTGITPTPFGEGKSTLTAGLVQALSNLDKLAIACVRQPSQGPTFGIKGGAAGGGYSQFIPMEEFNLHLTGDIHAITAATNLLAAAIDTRMFHENTQSDAALYKRLTLVKGNKREFAPVMFRRLKKLGIDKTNPEELTEEEQRKFARLDIEPSTISWNRTLDVNDRFLRKITIGENPTEKGFTRQTGFDLSVASECMSVLALATDLKDMRERLGRMVVASNKSGEPVTADDLGVGGALTVLLKDAIKPTLMQTLEGTPALVHAGPFANISIGASSILADRIALKLAGTEVDEDAKKEAGYVVTEAGFASDIGMEKFFNIKCRTSGLKPDAIVIVATVQALKLHGGGPPVGPGKPIPEVYKREDVDLVRKGCANLAKHISNARKYGLPVVVAINKFSSDSPNEISAIREEALAAGATDAVDSNHWAEGGKGALGVARALINACENVDSEFRLLYDVHEPIEKKIEIIAKEMYGADGIELSPLAKERLETFTKQGYNNLPICIAKTQYSLSHDPDLKGAPTNFTVPIRDMRLSAGAGFIYPLAAAISTIPGLPTKPAYYNIDIAENGDIVGLS</sequence>
<name>C1TC_SCHPO</name>
<comment type="catalytic activity">
    <reaction>
        <text>(6R)-5,10-methylene-5,6,7,8-tetrahydrofolate + NADP(+) = (6R)-5,10-methenyltetrahydrofolate + NADPH</text>
        <dbReference type="Rhea" id="RHEA:22812"/>
        <dbReference type="ChEBI" id="CHEBI:15636"/>
        <dbReference type="ChEBI" id="CHEBI:57455"/>
        <dbReference type="ChEBI" id="CHEBI:57783"/>
        <dbReference type="ChEBI" id="CHEBI:58349"/>
        <dbReference type="EC" id="1.5.1.5"/>
    </reaction>
</comment>
<comment type="catalytic activity">
    <reaction>
        <text>(6R)-5,10-methenyltetrahydrofolate + H2O = (6R)-10-formyltetrahydrofolate + H(+)</text>
        <dbReference type="Rhea" id="RHEA:23700"/>
        <dbReference type="ChEBI" id="CHEBI:15377"/>
        <dbReference type="ChEBI" id="CHEBI:15378"/>
        <dbReference type="ChEBI" id="CHEBI:57455"/>
        <dbReference type="ChEBI" id="CHEBI:195366"/>
        <dbReference type="EC" id="3.5.4.9"/>
    </reaction>
</comment>
<comment type="catalytic activity">
    <reaction>
        <text>(6S)-5,6,7,8-tetrahydrofolate + formate + ATP = (6R)-10-formyltetrahydrofolate + ADP + phosphate</text>
        <dbReference type="Rhea" id="RHEA:20221"/>
        <dbReference type="ChEBI" id="CHEBI:15740"/>
        <dbReference type="ChEBI" id="CHEBI:30616"/>
        <dbReference type="ChEBI" id="CHEBI:43474"/>
        <dbReference type="ChEBI" id="CHEBI:57453"/>
        <dbReference type="ChEBI" id="CHEBI:195366"/>
        <dbReference type="ChEBI" id="CHEBI:456216"/>
        <dbReference type="EC" id="6.3.4.3"/>
    </reaction>
</comment>
<comment type="pathway">
    <text>One-carbon metabolism; tetrahydrofolate interconversion.</text>
</comment>
<comment type="subunit">
    <text evidence="1">Homodimer.</text>
</comment>
<comment type="subcellular location">
    <subcellularLocation>
        <location evidence="2">Cytoplasm</location>
    </subcellularLocation>
</comment>
<comment type="domain">
    <text>This trifunctional enzyme consists of two major domains: an N-terminal part containing the methylene-THF dehydrogenase and cyclohydrolase activities and a larger C-terminal part containing formyl-THF synthetase activity.</text>
</comment>
<comment type="similarity">
    <text evidence="3">In the N-terminal section; belongs to the tetrahydrofolate dehydrogenase/cyclohydrolase family.</text>
</comment>
<comment type="similarity">
    <text evidence="3">In the C-terminal section; belongs to the formate--tetrahydrofolate ligase family.</text>
</comment>
<protein>
    <recommendedName>
        <fullName>C-1-tetrahydrofolate synthase, cytoplasmic</fullName>
        <shortName>C1-THF synthase</shortName>
    </recommendedName>
    <domain>
        <recommendedName>
            <fullName>Methylenetetrahydrofolate dehydrogenase</fullName>
            <ecNumber>1.5.1.5</ecNumber>
        </recommendedName>
    </domain>
    <domain>
        <recommendedName>
            <fullName>Methenyltetrahydrofolate cyclohydrolase</fullName>
            <ecNumber>3.5.4.9</ecNumber>
        </recommendedName>
    </domain>
    <domain>
        <recommendedName>
            <fullName>Formyltetrahydrofolate synthetase</fullName>
            <ecNumber>6.3.4.3</ecNumber>
        </recommendedName>
    </domain>
</protein>
<keyword id="KW-0028">Amino-acid biosynthesis</keyword>
<keyword id="KW-0067">ATP-binding</keyword>
<keyword id="KW-0963">Cytoplasm</keyword>
<keyword id="KW-0368">Histidine biosynthesis</keyword>
<keyword id="KW-0378">Hydrolase</keyword>
<keyword id="KW-0436">Ligase</keyword>
<keyword id="KW-0486">Methionine biosynthesis</keyword>
<keyword id="KW-0511">Multifunctional enzyme</keyword>
<keyword id="KW-0521">NADP</keyword>
<keyword id="KW-0547">Nucleotide-binding</keyword>
<keyword id="KW-0554">One-carbon metabolism</keyword>
<keyword id="KW-0560">Oxidoreductase</keyword>
<keyword id="KW-0658">Purine biosynthesis</keyword>
<keyword id="KW-1185">Reference proteome</keyword>
<dbReference type="EC" id="1.5.1.5"/>
<dbReference type="EC" id="3.5.4.9"/>
<dbReference type="EC" id="6.3.4.3"/>
<dbReference type="EMBL" id="CU329671">
    <property type="protein sequence ID" value="CAB46709.1"/>
    <property type="molecule type" value="Genomic_DNA"/>
</dbReference>
<dbReference type="PIR" id="T40723">
    <property type="entry name" value="T40723"/>
</dbReference>
<dbReference type="SMR" id="Q8WZJ7"/>
<dbReference type="BioGRID" id="277731">
    <property type="interactions" value="6"/>
</dbReference>
<dbReference type="FunCoup" id="Q8WZJ7">
    <property type="interactions" value="583"/>
</dbReference>
<dbReference type="STRING" id="284812.Q8WZJ7"/>
<dbReference type="iPTMnet" id="Q8WZJ7"/>
<dbReference type="PaxDb" id="4896-SPBC839.16.1"/>
<dbReference type="EnsemblFungi" id="SPBC839.16.1">
    <property type="protein sequence ID" value="SPBC839.16.1:pep"/>
    <property type="gene ID" value="SPBC839.16"/>
</dbReference>
<dbReference type="KEGG" id="spo:2541217"/>
<dbReference type="PomBase" id="SPBC839.16"/>
<dbReference type="VEuPathDB" id="FungiDB:SPBC839.16"/>
<dbReference type="eggNOG" id="KOG4230">
    <property type="taxonomic scope" value="Eukaryota"/>
</dbReference>
<dbReference type="HOGENOM" id="CLU_003601_2_0_1"/>
<dbReference type="InParanoid" id="Q8WZJ7"/>
<dbReference type="OMA" id="QPIMFRR"/>
<dbReference type="PhylomeDB" id="Q8WZJ7"/>
<dbReference type="Reactome" id="R-SPO-196757">
    <property type="pathway name" value="Metabolism of folate and pterines"/>
</dbReference>
<dbReference type="UniPathway" id="UPA00193"/>
<dbReference type="PRO" id="PR:Q8WZJ7"/>
<dbReference type="Proteomes" id="UP000002485">
    <property type="component" value="Chromosome II"/>
</dbReference>
<dbReference type="GO" id="GO:0005829">
    <property type="term" value="C:cytosol"/>
    <property type="evidence" value="ECO:0007005"/>
    <property type="project" value="PomBase"/>
</dbReference>
<dbReference type="GO" id="GO:0005524">
    <property type="term" value="F:ATP binding"/>
    <property type="evidence" value="ECO:0007669"/>
    <property type="project" value="UniProtKB-KW"/>
</dbReference>
<dbReference type="GO" id="GO:0004329">
    <property type="term" value="F:formate-tetrahydrofolate ligase activity"/>
    <property type="evidence" value="ECO:0000314"/>
    <property type="project" value="PomBase"/>
</dbReference>
<dbReference type="GO" id="GO:0004477">
    <property type="term" value="F:methenyltetrahydrofolate cyclohydrolase activity"/>
    <property type="evidence" value="ECO:0000314"/>
    <property type="project" value="PomBase"/>
</dbReference>
<dbReference type="GO" id="GO:0004488">
    <property type="term" value="F:methylenetetrahydrofolate dehydrogenase (NADP+) activity"/>
    <property type="evidence" value="ECO:0000314"/>
    <property type="project" value="PomBase"/>
</dbReference>
<dbReference type="GO" id="GO:0003697">
    <property type="term" value="F:single-stranded DNA binding"/>
    <property type="evidence" value="ECO:0000314"/>
    <property type="project" value="PomBase"/>
</dbReference>
<dbReference type="GO" id="GO:0009257">
    <property type="term" value="P:10-formyltetrahydrofolate biosynthetic process"/>
    <property type="evidence" value="ECO:0000314"/>
    <property type="project" value="PomBase"/>
</dbReference>
<dbReference type="GO" id="GO:0046656">
    <property type="term" value="P:folic acid biosynthetic process"/>
    <property type="evidence" value="ECO:0000314"/>
    <property type="project" value="PomBase"/>
</dbReference>
<dbReference type="GO" id="GO:0000105">
    <property type="term" value="P:L-histidine biosynthetic process"/>
    <property type="evidence" value="ECO:0007669"/>
    <property type="project" value="UniProtKB-KW"/>
</dbReference>
<dbReference type="GO" id="GO:0009086">
    <property type="term" value="P:methionine biosynthetic process"/>
    <property type="evidence" value="ECO:0007669"/>
    <property type="project" value="UniProtKB-KW"/>
</dbReference>
<dbReference type="GO" id="GO:0006730">
    <property type="term" value="P:one-carbon metabolic process"/>
    <property type="evidence" value="ECO:0000314"/>
    <property type="project" value="PomBase"/>
</dbReference>
<dbReference type="GO" id="GO:0006164">
    <property type="term" value="P:purine nucleotide biosynthetic process"/>
    <property type="evidence" value="ECO:0007669"/>
    <property type="project" value="UniProtKB-KW"/>
</dbReference>
<dbReference type="GO" id="GO:0035999">
    <property type="term" value="P:tetrahydrofolate interconversion"/>
    <property type="evidence" value="ECO:0000318"/>
    <property type="project" value="GO_Central"/>
</dbReference>
<dbReference type="CDD" id="cd00477">
    <property type="entry name" value="FTHFS"/>
    <property type="match status" value="1"/>
</dbReference>
<dbReference type="CDD" id="cd01080">
    <property type="entry name" value="NAD_bind_m-THF_DH_Cyclohyd"/>
    <property type="match status" value="1"/>
</dbReference>
<dbReference type="FunFam" id="3.40.50.720:FF:000006">
    <property type="entry name" value="Bifunctional protein FolD"/>
    <property type="match status" value="1"/>
</dbReference>
<dbReference type="FunFam" id="3.40.50.300:FF:000245">
    <property type="entry name" value="C-1-tetrahydrofolate synthase, cytoplasmic"/>
    <property type="match status" value="1"/>
</dbReference>
<dbReference type="FunFam" id="3.40.50.300:FF:001123">
    <property type="entry name" value="C-1-tetrahydrofolate synthase, cytoplasmic isoform X2"/>
    <property type="match status" value="1"/>
</dbReference>
<dbReference type="FunFam" id="3.40.50.10860:FF:000005">
    <property type="entry name" value="C-1-tetrahydrofolate synthase, cytoplasmic, putative"/>
    <property type="match status" value="1"/>
</dbReference>
<dbReference type="FunFam" id="3.10.410.10:FF:000001">
    <property type="entry name" value="Putative formate--tetrahydrofolate ligase"/>
    <property type="match status" value="1"/>
</dbReference>
<dbReference type="Gene3D" id="3.10.410.10">
    <property type="entry name" value="Formyltetrahydrofolate synthetase, domain 3"/>
    <property type="match status" value="1"/>
</dbReference>
<dbReference type="Gene3D" id="3.40.50.10860">
    <property type="entry name" value="Leucine Dehydrogenase, chain A, domain 1"/>
    <property type="match status" value="1"/>
</dbReference>
<dbReference type="Gene3D" id="3.40.50.720">
    <property type="entry name" value="NAD(P)-binding Rossmann-like Domain"/>
    <property type="match status" value="1"/>
</dbReference>
<dbReference type="Gene3D" id="3.40.50.300">
    <property type="entry name" value="P-loop containing nucleotide triphosphate hydrolases"/>
    <property type="match status" value="2"/>
</dbReference>
<dbReference type="HAMAP" id="MF_01543">
    <property type="entry name" value="FTHFS"/>
    <property type="match status" value="1"/>
</dbReference>
<dbReference type="HAMAP" id="MF_01576">
    <property type="entry name" value="THF_DHG_CYH"/>
    <property type="match status" value="1"/>
</dbReference>
<dbReference type="InterPro" id="IPR046346">
    <property type="entry name" value="Aminoacid_DH-like_N_sf"/>
</dbReference>
<dbReference type="InterPro" id="IPR000559">
    <property type="entry name" value="Formate_THF_ligase"/>
</dbReference>
<dbReference type="InterPro" id="IPR020628">
    <property type="entry name" value="Formate_THF_ligase_CS"/>
</dbReference>
<dbReference type="InterPro" id="IPR036291">
    <property type="entry name" value="NAD(P)-bd_dom_sf"/>
</dbReference>
<dbReference type="InterPro" id="IPR027417">
    <property type="entry name" value="P-loop_NTPase"/>
</dbReference>
<dbReference type="InterPro" id="IPR000672">
    <property type="entry name" value="THF_DH/CycHdrlase"/>
</dbReference>
<dbReference type="InterPro" id="IPR020630">
    <property type="entry name" value="THF_DH/CycHdrlase_cat_dom"/>
</dbReference>
<dbReference type="InterPro" id="IPR020631">
    <property type="entry name" value="THF_DH/CycHdrlase_NAD-bd_dom"/>
</dbReference>
<dbReference type="PANTHER" id="PTHR48099:SF22">
    <property type="entry name" value="C-1-TETRAHYDROFOLATE SYNTHASE, CYTOPLASMIC"/>
    <property type="match status" value="1"/>
</dbReference>
<dbReference type="PANTHER" id="PTHR48099">
    <property type="entry name" value="C-1-TETRAHYDROFOLATE SYNTHASE, CYTOPLASMIC-RELATED"/>
    <property type="match status" value="1"/>
</dbReference>
<dbReference type="Pfam" id="PF01268">
    <property type="entry name" value="FTHFS"/>
    <property type="match status" value="1"/>
</dbReference>
<dbReference type="Pfam" id="PF00763">
    <property type="entry name" value="THF_DHG_CYH"/>
    <property type="match status" value="1"/>
</dbReference>
<dbReference type="Pfam" id="PF02882">
    <property type="entry name" value="THF_DHG_CYH_C"/>
    <property type="match status" value="1"/>
</dbReference>
<dbReference type="PRINTS" id="PR00085">
    <property type="entry name" value="THFDHDRGNASE"/>
</dbReference>
<dbReference type="SUPFAM" id="SSF53223">
    <property type="entry name" value="Aminoacid dehydrogenase-like, N-terminal domain"/>
    <property type="match status" value="1"/>
</dbReference>
<dbReference type="SUPFAM" id="SSF51735">
    <property type="entry name" value="NAD(P)-binding Rossmann-fold domains"/>
    <property type="match status" value="1"/>
</dbReference>
<dbReference type="SUPFAM" id="SSF52540">
    <property type="entry name" value="P-loop containing nucleoside triphosphate hydrolases"/>
    <property type="match status" value="1"/>
</dbReference>
<dbReference type="PROSITE" id="PS00721">
    <property type="entry name" value="FTHFS_1"/>
    <property type="match status" value="1"/>
</dbReference>
<dbReference type="PROSITE" id="PS00722">
    <property type="entry name" value="FTHFS_2"/>
    <property type="match status" value="1"/>
</dbReference>